<keyword id="KW-0010">Activator</keyword>
<keyword id="KW-0426">Late protein</keyword>
<keyword id="KW-0479">Metal-binding</keyword>
<keyword id="KW-0804">Transcription</keyword>
<keyword id="KW-0805">Transcription regulation</keyword>
<keyword id="KW-0862">Zinc</keyword>
<keyword id="KW-0863">Zinc-finger</keyword>
<gene>
    <name type="primary">OPG127</name>
    <name type="synonym">VLTF3</name>
    <name type="ORF">A2L</name>
</gene>
<comment type="function">
    <text evidence="2">Acts with RNA polymerase to initiate transcription from late gene promoters.</text>
</comment>
<comment type="subunit">
    <text evidence="2">Interacts with the late transcription elongation factor VLTF-4/OPG110. Interacts with the late transcription factors VLTF-1/OPG093.</text>
</comment>
<comment type="developmental stage">
    <text>Intermediate stages of infection.</text>
</comment>
<comment type="similarity">
    <text evidence="3">Belongs to the orthopoxvirus VLTF-3/OPG127 family.</text>
</comment>
<sequence length="224" mass="26289">MNLRLCSGCRHNGIVSEQGYEYCIFCESVFQKCTKVQKKSNFHVSNKLIHLRNVLRRLLSHQCSGEIISELLDIMEKNQISTDDVDANFVSSFLKANERINKKDYKLVFEIINQVKDEKLNLSTEKINEVVEIFKHLVFFCQENTPSKTINYSFFLDKIFDITSVTKNLKPQTVKNYTKNNSNQLVWENFLAHMRSKKRVTMVEDYGHEYVFVDERFSTCSLEV</sequence>
<protein>
    <recommendedName>
        <fullName>Viral late gene transcription factor 3</fullName>
        <shortName>VLTF-3</shortName>
    </recommendedName>
    <alternativeName>
        <fullName>Trans-activator protein A2</fullName>
    </alternativeName>
</protein>
<name>VLTF3_VARV</name>
<reference key="1">
    <citation type="journal article" date="1993" name="Nature">
        <title>Potential virulence determinants in terminal regions of variola smallpox virus genome.</title>
        <authorList>
            <person name="Massung R.F."/>
            <person name="Esposito J.J."/>
            <person name="Liu L.I."/>
            <person name="Qi J."/>
            <person name="Utterback T.R."/>
            <person name="Knight J.C."/>
            <person name="Aubin L."/>
            <person name="Yuran T.E."/>
            <person name="Parsons J.M."/>
            <person name="Loparev V.N."/>
            <person name="Selivanov N.A."/>
            <person name="Cavallaro K.F."/>
            <person name="Kerlavage A.R."/>
            <person name="Mahy B.W.J."/>
            <person name="Venter J.C."/>
        </authorList>
    </citation>
    <scope>NUCLEOTIDE SEQUENCE [GENOMIC DNA]</scope>
    <source>
        <strain>Bangladesh-1975</strain>
    </source>
</reference>
<reference key="2">
    <citation type="submission" date="1995-12" db="EMBL/GenBank/DDBJ databases">
        <title>XhoI-M DNA fragment of Variola minor virus strain Garcia-1966.</title>
        <authorList>
            <person name="Shchelkunov S.N."/>
            <person name="Totmenin A.V."/>
            <person name="Resenchuk S.M."/>
            <person name="Blinov V.M."/>
            <person name="Sandakhchiev L.S."/>
        </authorList>
    </citation>
    <scope>NUCLEOTIDE SEQUENCE [GENOMIC DNA]</scope>
    <source>
        <strain>Garcia-1966</strain>
    </source>
</reference>
<accession>P0DOT6</accession>
<accession>P07609</accession>
<accession>P68320</accession>
<dbReference type="EMBL" id="L22579">
    <property type="protein sequence ID" value="AAA60853.1"/>
    <property type="molecule type" value="Genomic_DNA"/>
</dbReference>
<dbReference type="EMBL" id="X76262">
    <property type="protein sequence ID" value="CAA53827.1"/>
    <property type="molecule type" value="Genomic_DNA"/>
</dbReference>
<dbReference type="PIR" id="G72163">
    <property type="entry name" value="G72163"/>
</dbReference>
<dbReference type="PIR" id="T28543">
    <property type="entry name" value="T28543"/>
</dbReference>
<dbReference type="RefSeq" id="NP_042149.1">
    <property type="nucleotide sequence ID" value="NC_001611.1"/>
</dbReference>
<dbReference type="SMR" id="P0DOT6"/>
<dbReference type="GeneID" id="1486506"/>
<dbReference type="KEGG" id="vg:1486506"/>
<dbReference type="Proteomes" id="UP000119805">
    <property type="component" value="Segment"/>
</dbReference>
<dbReference type="GO" id="GO:0008270">
    <property type="term" value="F:zinc ion binding"/>
    <property type="evidence" value="ECO:0007669"/>
    <property type="project" value="UniProtKB-KW"/>
</dbReference>
<dbReference type="GO" id="GO:0046782">
    <property type="term" value="P:regulation of viral transcription"/>
    <property type="evidence" value="ECO:0007669"/>
    <property type="project" value="InterPro"/>
</dbReference>
<dbReference type="InterPro" id="IPR007031">
    <property type="entry name" value="Poxvirus_VLTF3"/>
</dbReference>
<dbReference type="InterPro" id="IPR014900">
    <property type="entry name" value="VLTF-3_Zn_ribbon"/>
</dbReference>
<dbReference type="Pfam" id="PF08792">
    <property type="entry name" value="A2L_zn_ribbon"/>
    <property type="match status" value="1"/>
</dbReference>
<dbReference type="Pfam" id="PF04947">
    <property type="entry name" value="Pox_VLTF3"/>
    <property type="match status" value="1"/>
</dbReference>
<organism>
    <name type="scientific">Variola virus</name>
    <dbReference type="NCBI Taxonomy" id="10255"/>
    <lineage>
        <taxon>Viruses</taxon>
        <taxon>Varidnaviria</taxon>
        <taxon>Bamfordvirae</taxon>
        <taxon>Nucleocytoviricota</taxon>
        <taxon>Pokkesviricetes</taxon>
        <taxon>Chitovirales</taxon>
        <taxon>Poxviridae</taxon>
        <taxon>Chordopoxvirinae</taxon>
        <taxon>Orthopoxvirus</taxon>
    </lineage>
</organism>
<organismHost>
    <name type="scientific">Homo sapiens</name>
    <name type="common">Human</name>
    <dbReference type="NCBI Taxonomy" id="9606"/>
</organismHost>
<feature type="chain" id="PRO_0000448130" description="Viral late gene transcription factor 3">
    <location>
        <begin position="1"/>
        <end position="224"/>
    </location>
</feature>
<feature type="zinc finger region" evidence="1">
    <location>
        <begin position="6"/>
        <end position="26"/>
    </location>
</feature>
<proteinExistence type="evidence at transcript level"/>
<evidence type="ECO:0000250" key="1"/>
<evidence type="ECO:0000250" key="2">
    <source>
        <dbReference type="UniProtKB" id="P68319"/>
    </source>
</evidence>
<evidence type="ECO:0000305" key="3"/>